<dbReference type="EC" id="2.8.1.8" evidence="1"/>
<dbReference type="EMBL" id="CP001628">
    <property type="protein sequence ID" value="ACS30842.1"/>
    <property type="molecule type" value="Genomic_DNA"/>
</dbReference>
<dbReference type="RefSeq" id="WP_010078524.1">
    <property type="nucleotide sequence ID" value="NC_012803.1"/>
</dbReference>
<dbReference type="SMR" id="C5CCN0"/>
<dbReference type="STRING" id="465515.Mlut_13370"/>
<dbReference type="EnsemblBacteria" id="ACS30842">
    <property type="protein sequence ID" value="ACS30842"/>
    <property type="gene ID" value="Mlut_13370"/>
</dbReference>
<dbReference type="GeneID" id="93343219"/>
<dbReference type="KEGG" id="mlu:Mlut_13370"/>
<dbReference type="PATRIC" id="fig|465515.4.peg.1279"/>
<dbReference type="eggNOG" id="COG0320">
    <property type="taxonomic scope" value="Bacteria"/>
</dbReference>
<dbReference type="HOGENOM" id="CLU_033144_2_1_11"/>
<dbReference type="UniPathway" id="UPA00538">
    <property type="reaction ID" value="UER00593"/>
</dbReference>
<dbReference type="Proteomes" id="UP000000738">
    <property type="component" value="Chromosome"/>
</dbReference>
<dbReference type="GO" id="GO:0005737">
    <property type="term" value="C:cytoplasm"/>
    <property type="evidence" value="ECO:0007669"/>
    <property type="project" value="UniProtKB-SubCell"/>
</dbReference>
<dbReference type="GO" id="GO:0051539">
    <property type="term" value="F:4 iron, 4 sulfur cluster binding"/>
    <property type="evidence" value="ECO:0007669"/>
    <property type="project" value="UniProtKB-UniRule"/>
</dbReference>
<dbReference type="GO" id="GO:0016992">
    <property type="term" value="F:lipoate synthase activity"/>
    <property type="evidence" value="ECO:0007669"/>
    <property type="project" value="UniProtKB-UniRule"/>
</dbReference>
<dbReference type="GO" id="GO:0046872">
    <property type="term" value="F:metal ion binding"/>
    <property type="evidence" value="ECO:0007669"/>
    <property type="project" value="UniProtKB-KW"/>
</dbReference>
<dbReference type="CDD" id="cd01335">
    <property type="entry name" value="Radical_SAM"/>
    <property type="match status" value="1"/>
</dbReference>
<dbReference type="Gene3D" id="3.20.20.70">
    <property type="entry name" value="Aldolase class I"/>
    <property type="match status" value="1"/>
</dbReference>
<dbReference type="HAMAP" id="MF_00206">
    <property type="entry name" value="Lipoyl_synth"/>
    <property type="match status" value="1"/>
</dbReference>
<dbReference type="InterPro" id="IPR013785">
    <property type="entry name" value="Aldolase_TIM"/>
</dbReference>
<dbReference type="InterPro" id="IPR006638">
    <property type="entry name" value="Elp3/MiaA/NifB-like_rSAM"/>
</dbReference>
<dbReference type="InterPro" id="IPR031691">
    <property type="entry name" value="LIAS_N"/>
</dbReference>
<dbReference type="InterPro" id="IPR003698">
    <property type="entry name" value="Lipoyl_synth"/>
</dbReference>
<dbReference type="InterPro" id="IPR007197">
    <property type="entry name" value="rSAM"/>
</dbReference>
<dbReference type="NCBIfam" id="TIGR00510">
    <property type="entry name" value="lipA"/>
    <property type="match status" value="1"/>
</dbReference>
<dbReference type="NCBIfam" id="NF004019">
    <property type="entry name" value="PRK05481.1"/>
    <property type="match status" value="1"/>
</dbReference>
<dbReference type="NCBIfam" id="NF009544">
    <property type="entry name" value="PRK12928.1"/>
    <property type="match status" value="1"/>
</dbReference>
<dbReference type="PANTHER" id="PTHR10949">
    <property type="entry name" value="LIPOYL SYNTHASE"/>
    <property type="match status" value="1"/>
</dbReference>
<dbReference type="PANTHER" id="PTHR10949:SF0">
    <property type="entry name" value="LIPOYL SYNTHASE, MITOCHONDRIAL"/>
    <property type="match status" value="1"/>
</dbReference>
<dbReference type="Pfam" id="PF16881">
    <property type="entry name" value="LIAS_N"/>
    <property type="match status" value="1"/>
</dbReference>
<dbReference type="Pfam" id="PF04055">
    <property type="entry name" value="Radical_SAM"/>
    <property type="match status" value="1"/>
</dbReference>
<dbReference type="PIRSF" id="PIRSF005963">
    <property type="entry name" value="Lipoyl_synth"/>
    <property type="match status" value="1"/>
</dbReference>
<dbReference type="SFLD" id="SFLDF00271">
    <property type="entry name" value="lipoyl_synthase"/>
    <property type="match status" value="1"/>
</dbReference>
<dbReference type="SFLD" id="SFLDG01058">
    <property type="entry name" value="lipoyl_synthase_like"/>
    <property type="match status" value="1"/>
</dbReference>
<dbReference type="SMART" id="SM00729">
    <property type="entry name" value="Elp3"/>
    <property type="match status" value="1"/>
</dbReference>
<dbReference type="SUPFAM" id="SSF102114">
    <property type="entry name" value="Radical SAM enzymes"/>
    <property type="match status" value="1"/>
</dbReference>
<dbReference type="PROSITE" id="PS51918">
    <property type="entry name" value="RADICAL_SAM"/>
    <property type="match status" value="1"/>
</dbReference>
<name>LIPA_MICLC</name>
<organism>
    <name type="scientific">Micrococcus luteus (strain ATCC 4698 / DSM 20030 / JCM 1464 / CCM 169 / CCUG 5858 / IAM 1056 / NBRC 3333 / NCIMB 9278 / NCTC 2665 / VKM Ac-2230)</name>
    <name type="common">Micrococcus lysodeikticus</name>
    <dbReference type="NCBI Taxonomy" id="465515"/>
    <lineage>
        <taxon>Bacteria</taxon>
        <taxon>Bacillati</taxon>
        <taxon>Actinomycetota</taxon>
        <taxon>Actinomycetes</taxon>
        <taxon>Micrococcales</taxon>
        <taxon>Micrococcaceae</taxon>
        <taxon>Micrococcus</taxon>
    </lineage>
</organism>
<keyword id="KW-0004">4Fe-4S</keyword>
<keyword id="KW-0963">Cytoplasm</keyword>
<keyword id="KW-0408">Iron</keyword>
<keyword id="KW-0411">Iron-sulfur</keyword>
<keyword id="KW-0479">Metal-binding</keyword>
<keyword id="KW-1185">Reference proteome</keyword>
<keyword id="KW-0949">S-adenosyl-L-methionine</keyword>
<keyword id="KW-0808">Transferase</keyword>
<evidence type="ECO:0000255" key="1">
    <source>
        <dbReference type="HAMAP-Rule" id="MF_00206"/>
    </source>
</evidence>
<evidence type="ECO:0000255" key="2">
    <source>
        <dbReference type="PROSITE-ProRule" id="PRU01266"/>
    </source>
</evidence>
<protein>
    <recommendedName>
        <fullName evidence="1">Lipoyl synthase</fullName>
        <ecNumber evidence="1">2.8.1.8</ecNumber>
    </recommendedName>
    <alternativeName>
        <fullName evidence="1">Lip-syn</fullName>
        <shortName evidence="1">LS</shortName>
    </alternativeName>
    <alternativeName>
        <fullName evidence="1">Lipoate synthase</fullName>
    </alternativeName>
    <alternativeName>
        <fullName evidence="1">Lipoic acid synthase</fullName>
    </alternativeName>
    <alternativeName>
        <fullName evidence="1">Sulfur insertion protein LipA</fullName>
    </alternativeName>
</protein>
<proteinExistence type="inferred from homology"/>
<gene>
    <name evidence="1" type="primary">lipA</name>
    <name type="ordered locus">Mlut_13370</name>
</gene>
<sequence length="335" mass="37637">MSLAPEGRRLLRVEARNAEVPVERKPEWIKAKVHMGPEYIGLKNKVKSAGLHTVCEEAGCPNIFECWEDREATFLIGGDICTRRCDFCDITSGKPRPLDMEEPQKVAENIREMDLRYATVTGVARDDQKDGAAWLYAETIRRIHALNPGTGVEILPPDFGAVPELVQQVFDARPEVFAHNLETVPRIFKRIRPAFTYEKSLRVLTMAKADGLVTKSNLILGMGEEDHEIDQALVDLHESGCDIITITQYVRPSKLHHPIDRWVKPQEFVQWSQRAEEIGFQGVMAGPLVRSSYRAGKLYAQAMQRLGRTLPENLAHLAGEKTARQEASAVVAQMS</sequence>
<reference key="1">
    <citation type="journal article" date="2010" name="J. Bacteriol.">
        <title>Genome sequence of the Fleming strain of Micrococcus luteus, a simple free-living actinobacterium.</title>
        <authorList>
            <person name="Young M."/>
            <person name="Artsatbanov V."/>
            <person name="Beller H.R."/>
            <person name="Chandra G."/>
            <person name="Chater K.F."/>
            <person name="Dover L.G."/>
            <person name="Goh E.B."/>
            <person name="Kahan T."/>
            <person name="Kaprelyants A.S."/>
            <person name="Kyrpides N."/>
            <person name="Lapidus A."/>
            <person name="Lowry S.R."/>
            <person name="Lykidis A."/>
            <person name="Mahillon J."/>
            <person name="Markowitz V."/>
            <person name="Mavromatis K."/>
            <person name="Mukamolova G.V."/>
            <person name="Oren A."/>
            <person name="Rokem J.S."/>
            <person name="Smith M.C."/>
            <person name="Young D.I."/>
            <person name="Greenblatt C.L."/>
        </authorList>
    </citation>
    <scope>NUCLEOTIDE SEQUENCE [LARGE SCALE GENOMIC DNA]</scope>
    <source>
        <strain>ATCC 4698 / DSM 20030 / JCM 1464 / CCM 169 / CCUG 5858 / IAM 1056 / NBRC 3333 / NCIMB 9278 / NCTC 2665 / VKM Ac-2230</strain>
    </source>
</reference>
<feature type="chain" id="PRO_1000204152" description="Lipoyl synthase">
    <location>
        <begin position="1"/>
        <end position="335"/>
    </location>
</feature>
<feature type="domain" description="Radical SAM core" evidence="2">
    <location>
        <begin position="67"/>
        <end position="281"/>
    </location>
</feature>
<feature type="binding site" evidence="1">
    <location>
        <position position="55"/>
    </location>
    <ligand>
        <name>[4Fe-4S] cluster</name>
        <dbReference type="ChEBI" id="CHEBI:49883"/>
        <label>1</label>
    </ligand>
</feature>
<feature type="binding site" evidence="1">
    <location>
        <position position="60"/>
    </location>
    <ligand>
        <name>[4Fe-4S] cluster</name>
        <dbReference type="ChEBI" id="CHEBI:49883"/>
        <label>1</label>
    </ligand>
</feature>
<feature type="binding site" evidence="1">
    <location>
        <position position="66"/>
    </location>
    <ligand>
        <name>[4Fe-4S] cluster</name>
        <dbReference type="ChEBI" id="CHEBI:49883"/>
        <label>1</label>
    </ligand>
</feature>
<feature type="binding site" evidence="1">
    <location>
        <position position="81"/>
    </location>
    <ligand>
        <name>[4Fe-4S] cluster</name>
        <dbReference type="ChEBI" id="CHEBI:49883"/>
        <label>2</label>
        <note>4Fe-4S-S-AdoMet</note>
    </ligand>
</feature>
<feature type="binding site" evidence="1">
    <location>
        <position position="85"/>
    </location>
    <ligand>
        <name>[4Fe-4S] cluster</name>
        <dbReference type="ChEBI" id="CHEBI:49883"/>
        <label>2</label>
        <note>4Fe-4S-S-AdoMet</note>
    </ligand>
</feature>
<feature type="binding site" evidence="1">
    <location>
        <position position="88"/>
    </location>
    <ligand>
        <name>[4Fe-4S] cluster</name>
        <dbReference type="ChEBI" id="CHEBI:49883"/>
        <label>2</label>
        <note>4Fe-4S-S-AdoMet</note>
    </ligand>
</feature>
<feature type="binding site" evidence="1">
    <location>
        <position position="292"/>
    </location>
    <ligand>
        <name>[4Fe-4S] cluster</name>
        <dbReference type="ChEBI" id="CHEBI:49883"/>
        <label>1</label>
    </ligand>
</feature>
<comment type="function">
    <text evidence="1">Catalyzes the radical-mediated insertion of two sulfur atoms into the C-6 and C-8 positions of the octanoyl moiety bound to the lipoyl domains of lipoate-dependent enzymes, thereby converting the octanoylated domains into lipoylated derivatives.</text>
</comment>
<comment type="catalytic activity">
    <reaction evidence="1">
        <text>[[Fe-S] cluster scaffold protein carrying a second [4Fe-4S](2+) cluster] + N(6)-octanoyl-L-lysyl-[protein] + 2 oxidized [2Fe-2S]-[ferredoxin] + 2 S-adenosyl-L-methionine + 4 H(+) = [[Fe-S] cluster scaffold protein] + N(6)-[(R)-dihydrolipoyl]-L-lysyl-[protein] + 4 Fe(3+) + 2 hydrogen sulfide + 2 5'-deoxyadenosine + 2 L-methionine + 2 reduced [2Fe-2S]-[ferredoxin]</text>
        <dbReference type="Rhea" id="RHEA:16585"/>
        <dbReference type="Rhea" id="RHEA-COMP:9928"/>
        <dbReference type="Rhea" id="RHEA-COMP:10000"/>
        <dbReference type="Rhea" id="RHEA-COMP:10001"/>
        <dbReference type="Rhea" id="RHEA-COMP:10475"/>
        <dbReference type="Rhea" id="RHEA-COMP:14568"/>
        <dbReference type="Rhea" id="RHEA-COMP:14569"/>
        <dbReference type="ChEBI" id="CHEBI:15378"/>
        <dbReference type="ChEBI" id="CHEBI:17319"/>
        <dbReference type="ChEBI" id="CHEBI:29034"/>
        <dbReference type="ChEBI" id="CHEBI:29919"/>
        <dbReference type="ChEBI" id="CHEBI:33722"/>
        <dbReference type="ChEBI" id="CHEBI:33737"/>
        <dbReference type="ChEBI" id="CHEBI:33738"/>
        <dbReference type="ChEBI" id="CHEBI:57844"/>
        <dbReference type="ChEBI" id="CHEBI:59789"/>
        <dbReference type="ChEBI" id="CHEBI:78809"/>
        <dbReference type="ChEBI" id="CHEBI:83100"/>
        <dbReference type="EC" id="2.8.1.8"/>
    </reaction>
</comment>
<comment type="cofactor">
    <cofactor evidence="1">
        <name>[4Fe-4S] cluster</name>
        <dbReference type="ChEBI" id="CHEBI:49883"/>
    </cofactor>
    <text evidence="1">Binds 2 [4Fe-4S] clusters per subunit. One cluster is coordinated with 3 cysteines and an exchangeable S-adenosyl-L-methionine.</text>
</comment>
<comment type="pathway">
    <text evidence="1">Protein modification; protein lipoylation via endogenous pathway; protein N(6)-(lipoyl)lysine from octanoyl-[acyl-carrier-protein]: step 2/2.</text>
</comment>
<comment type="subcellular location">
    <subcellularLocation>
        <location evidence="1">Cytoplasm</location>
    </subcellularLocation>
</comment>
<comment type="similarity">
    <text evidence="1">Belongs to the radical SAM superfamily. Lipoyl synthase family.</text>
</comment>
<accession>C5CCN0</accession>